<evidence type="ECO:0000255" key="1">
    <source>
        <dbReference type="HAMAP-Rule" id="MF_01498"/>
    </source>
</evidence>
<sequence length="446" mass="48329">MTKDKKHYICSNCGNTSPKWSGQCFDCGVWGSIVEEIVSTNKAIVKTGSKQDFDKLSGHVAEQLRIPTPIGELNRVLGGGLVLGSAILIGGDPGIGKSTLLLQLAASNFASKMNCLYITGEESLDQIKLRAIRLNLTNYNTDILAATNLEDIIASIEANKNNIDLVVIDSIQTITTKELSSPPGTVSQIRICANELVNYAKQNNIIILLSCHVTKDGQLAGPKILEHLVDTVLYFEGDHNNHFRILRSYKNRFGGVGEIGVFEMCGSGLIEVTNPSELFLMKREQNVIGTSIFAGIEGSRPLLMEVQALIVPSNMVTPRRSAVGWDANRLSMILAVLSSRIGLNLANYEVYLSIAGGLKIADPASDLAVAASLISAATGKPVPEHSVFFGEISLSGEIRKTAKAETRIKEAVKLGFNKIICSKLENLTYDFISSVSHLKDLKEIIR</sequence>
<accession>Q4UL56</accession>
<comment type="function">
    <text evidence="1">DNA-dependent ATPase involved in processing of recombination intermediates, plays a role in repairing DNA breaks. Stimulates the branch migration of RecA-mediated strand transfer reactions, allowing the 3' invading strand to extend heteroduplex DNA faster. Binds ssDNA in the presence of ADP but not other nucleotides, has ATPase activity that is stimulated by ssDNA and various branched DNA structures, but inhibited by SSB. Does not have RecA's homology-searching function.</text>
</comment>
<comment type="domain">
    <text evidence="1">Has a putative N-terminal zinc-finger, a middle region with homology to RecA with ATPase motifs including the RadA KNRFG motif, while the C-terminus is homologous to Lon protease.</text>
</comment>
<comment type="similarity">
    <text evidence="1">Belongs to the RecA family. RadA subfamily.</text>
</comment>
<protein>
    <recommendedName>
        <fullName evidence="1">DNA repair protein RadA</fullName>
        <ecNumber evidence="1">3.6.4.-</ecNumber>
    </recommendedName>
    <alternativeName>
        <fullName evidence="1">Branch migration protein RadA</fullName>
    </alternativeName>
</protein>
<keyword id="KW-0067">ATP-binding</keyword>
<keyword id="KW-0227">DNA damage</keyword>
<keyword id="KW-0234">DNA repair</keyword>
<keyword id="KW-0238">DNA-binding</keyword>
<keyword id="KW-0378">Hydrolase</keyword>
<keyword id="KW-0479">Metal-binding</keyword>
<keyword id="KW-0547">Nucleotide-binding</keyword>
<keyword id="KW-0346">Stress response</keyword>
<keyword id="KW-0862">Zinc</keyword>
<keyword id="KW-0863">Zinc-finger</keyword>
<dbReference type="EC" id="3.6.4.-" evidence="1"/>
<dbReference type="EMBL" id="CP000053">
    <property type="protein sequence ID" value="AAY61717.1"/>
    <property type="molecule type" value="Genomic_DNA"/>
</dbReference>
<dbReference type="SMR" id="Q4UL56"/>
<dbReference type="STRING" id="315456.RF_0866"/>
<dbReference type="MEROPS" id="S16.A04"/>
<dbReference type="KEGG" id="rfe:RF_0866"/>
<dbReference type="eggNOG" id="COG1066">
    <property type="taxonomic scope" value="Bacteria"/>
</dbReference>
<dbReference type="HOGENOM" id="CLU_018264_0_1_5"/>
<dbReference type="OrthoDB" id="9803906at2"/>
<dbReference type="Proteomes" id="UP000008548">
    <property type="component" value="Chromosome"/>
</dbReference>
<dbReference type="GO" id="GO:0005829">
    <property type="term" value="C:cytosol"/>
    <property type="evidence" value="ECO:0007669"/>
    <property type="project" value="TreeGrafter"/>
</dbReference>
<dbReference type="GO" id="GO:0005524">
    <property type="term" value="F:ATP binding"/>
    <property type="evidence" value="ECO:0007669"/>
    <property type="project" value="UniProtKB-UniRule"/>
</dbReference>
<dbReference type="GO" id="GO:0016887">
    <property type="term" value="F:ATP hydrolysis activity"/>
    <property type="evidence" value="ECO:0007669"/>
    <property type="project" value="InterPro"/>
</dbReference>
<dbReference type="GO" id="GO:0140664">
    <property type="term" value="F:ATP-dependent DNA damage sensor activity"/>
    <property type="evidence" value="ECO:0007669"/>
    <property type="project" value="InterPro"/>
</dbReference>
<dbReference type="GO" id="GO:0003684">
    <property type="term" value="F:damaged DNA binding"/>
    <property type="evidence" value="ECO:0007669"/>
    <property type="project" value="InterPro"/>
</dbReference>
<dbReference type="GO" id="GO:0008270">
    <property type="term" value="F:zinc ion binding"/>
    <property type="evidence" value="ECO:0007669"/>
    <property type="project" value="UniProtKB-KW"/>
</dbReference>
<dbReference type="GO" id="GO:0000725">
    <property type="term" value="P:recombinational repair"/>
    <property type="evidence" value="ECO:0007669"/>
    <property type="project" value="UniProtKB-UniRule"/>
</dbReference>
<dbReference type="CDD" id="cd01121">
    <property type="entry name" value="RadA_SMS_N"/>
    <property type="match status" value="1"/>
</dbReference>
<dbReference type="FunFam" id="3.40.50.300:FF:000050">
    <property type="entry name" value="DNA repair protein RadA"/>
    <property type="match status" value="1"/>
</dbReference>
<dbReference type="Gene3D" id="3.30.230.10">
    <property type="match status" value="1"/>
</dbReference>
<dbReference type="Gene3D" id="3.40.50.300">
    <property type="entry name" value="P-loop containing nucleotide triphosphate hydrolases"/>
    <property type="match status" value="1"/>
</dbReference>
<dbReference type="HAMAP" id="MF_01498">
    <property type="entry name" value="RadA_bact"/>
    <property type="match status" value="1"/>
</dbReference>
<dbReference type="InterPro" id="IPR003593">
    <property type="entry name" value="AAA+_ATPase"/>
</dbReference>
<dbReference type="InterPro" id="IPR004504">
    <property type="entry name" value="DNA_repair_RadA"/>
</dbReference>
<dbReference type="InterPro" id="IPR027417">
    <property type="entry name" value="P-loop_NTPase"/>
</dbReference>
<dbReference type="InterPro" id="IPR020588">
    <property type="entry name" value="RecA_ATP-bd"/>
</dbReference>
<dbReference type="InterPro" id="IPR020568">
    <property type="entry name" value="Ribosomal_Su5_D2-typ_SF"/>
</dbReference>
<dbReference type="InterPro" id="IPR014721">
    <property type="entry name" value="Ribsml_uS5_D2-typ_fold_subgr"/>
</dbReference>
<dbReference type="InterPro" id="IPR041166">
    <property type="entry name" value="Rubredoxin_2"/>
</dbReference>
<dbReference type="NCBIfam" id="TIGR00416">
    <property type="entry name" value="sms"/>
    <property type="match status" value="1"/>
</dbReference>
<dbReference type="PANTHER" id="PTHR32472">
    <property type="entry name" value="DNA REPAIR PROTEIN RADA"/>
    <property type="match status" value="1"/>
</dbReference>
<dbReference type="PANTHER" id="PTHR32472:SF10">
    <property type="entry name" value="DNA REPAIR PROTEIN RADA-LIKE PROTEIN"/>
    <property type="match status" value="1"/>
</dbReference>
<dbReference type="Pfam" id="PF13481">
    <property type="entry name" value="AAA_25"/>
    <property type="match status" value="1"/>
</dbReference>
<dbReference type="Pfam" id="PF13541">
    <property type="entry name" value="ChlI"/>
    <property type="match status" value="1"/>
</dbReference>
<dbReference type="Pfam" id="PF18073">
    <property type="entry name" value="Zn_ribbon_LapB"/>
    <property type="match status" value="1"/>
</dbReference>
<dbReference type="PRINTS" id="PR01874">
    <property type="entry name" value="DNAREPAIRADA"/>
</dbReference>
<dbReference type="SMART" id="SM00382">
    <property type="entry name" value="AAA"/>
    <property type="match status" value="1"/>
</dbReference>
<dbReference type="SUPFAM" id="SSF52540">
    <property type="entry name" value="P-loop containing nucleoside triphosphate hydrolases"/>
    <property type="match status" value="1"/>
</dbReference>
<dbReference type="SUPFAM" id="SSF54211">
    <property type="entry name" value="Ribosomal protein S5 domain 2-like"/>
    <property type="match status" value="1"/>
</dbReference>
<dbReference type="PROSITE" id="PS50162">
    <property type="entry name" value="RECA_2"/>
    <property type="match status" value="1"/>
</dbReference>
<organism>
    <name type="scientific">Rickettsia felis (strain ATCC VR-1525 / URRWXCal2)</name>
    <name type="common">Rickettsia azadi</name>
    <dbReference type="NCBI Taxonomy" id="315456"/>
    <lineage>
        <taxon>Bacteria</taxon>
        <taxon>Pseudomonadati</taxon>
        <taxon>Pseudomonadota</taxon>
        <taxon>Alphaproteobacteria</taxon>
        <taxon>Rickettsiales</taxon>
        <taxon>Rickettsiaceae</taxon>
        <taxon>Rickettsieae</taxon>
        <taxon>Rickettsia</taxon>
        <taxon>spotted fever group</taxon>
    </lineage>
</organism>
<reference key="1">
    <citation type="journal article" date="2005" name="PLoS Biol.">
        <title>The genome sequence of Rickettsia felis identifies the first putative conjugative plasmid in an obligate intracellular parasite.</title>
        <authorList>
            <person name="Ogata H."/>
            <person name="Renesto P."/>
            <person name="Audic S."/>
            <person name="Robert C."/>
            <person name="Blanc G."/>
            <person name="Fournier P.-E."/>
            <person name="Parinello H."/>
            <person name="Claverie J.-M."/>
            <person name="Raoult D."/>
        </authorList>
    </citation>
    <scope>NUCLEOTIDE SEQUENCE [LARGE SCALE GENOMIC DNA]</scope>
    <source>
        <strain>ATCC VR-1525 / URRWXCal2</strain>
    </source>
</reference>
<proteinExistence type="inferred from homology"/>
<name>RADA_RICFE</name>
<feature type="chain" id="PRO_0000286660" description="DNA repair protein RadA">
    <location>
        <begin position="1"/>
        <end position="446"/>
    </location>
</feature>
<feature type="zinc finger region" description="C4-type" evidence="1">
    <location>
        <begin position="10"/>
        <end position="27"/>
    </location>
</feature>
<feature type="region of interest" description="Lon-protease-like" evidence="1">
    <location>
        <begin position="349"/>
        <end position="446"/>
    </location>
</feature>
<feature type="short sequence motif" description="RadA KNRFG motif" evidence="1">
    <location>
        <begin position="250"/>
        <end position="254"/>
    </location>
</feature>
<feature type="binding site" evidence="1">
    <location>
        <begin position="91"/>
        <end position="98"/>
    </location>
    <ligand>
        <name>ATP</name>
        <dbReference type="ChEBI" id="CHEBI:30616"/>
    </ligand>
</feature>
<gene>
    <name evidence="1" type="primary">radA</name>
    <name type="ordered locus">RF_0866</name>
</gene>